<sequence length="417" mass="47510">MPLLDPNTQTLAESSAAQPQRLPFPPVTYSHILHCSYHQWQPRYRTLTPKSRAIPLTPSFVSYLRANGIVLPPETTRPHGDDDIDTFSDDGADEESDPSVEWQEIHSQIKSTISEFGGKVTPKLNWSAPKDAVWMSATNDLQCRTPNDIYLLLKSSDFITHDLEHPFDGCVPDPDDSSEAPATQPDIPYYLVLRKYVNFNPSLEFRCFVRNRVLLCMCQRDQNHFDFLFSLRDTLRSRIQAFFDEKLKDTFPDPNFVFDVYIPEPHQRVWLIDINPWADRTDPLLFSWLEILQMKDPIGIKEEDTDAPEESFVRLSLNGATPTVVEVNRDEDSESEKDVGSADDGDDSPFLPEFRLVKRDDPEAYSFSTPQYSAHKLPKEVVDASLAGSGGMSEFLGKWQDILAKQTQEDTDSDDGR</sequence>
<comment type="function">
    <text evidence="2">ATP-dependent protein-folding chaperone for the eIF2 complex. Binds to the gamma subunit of the eIF2 complex which allows the subunit to assemble with the alpha and beta subunits.</text>
</comment>
<comment type="subcellular location">
    <subcellularLocation>
        <location evidence="2">Cytoplasm</location>
    </subcellularLocation>
</comment>
<comment type="similarity">
    <text evidence="5">Belongs to the CDC123 family.</text>
</comment>
<accession>Q4WDA4</accession>
<name>CD123_ASPFU</name>
<keyword id="KW-0067">ATP-binding</keyword>
<keyword id="KW-0143">Chaperone</keyword>
<keyword id="KW-0963">Cytoplasm</keyword>
<keyword id="KW-0460">Magnesium</keyword>
<keyword id="KW-0479">Metal-binding</keyword>
<keyword id="KW-0547">Nucleotide-binding</keyword>
<keyword id="KW-1185">Reference proteome</keyword>
<dbReference type="EMBL" id="AAHF01000012">
    <property type="protein sequence ID" value="EAL85634.1"/>
    <property type="molecule type" value="Genomic_DNA"/>
</dbReference>
<dbReference type="RefSeq" id="XP_747672.1">
    <property type="nucleotide sequence ID" value="XM_742579.1"/>
</dbReference>
<dbReference type="SMR" id="Q4WDA4"/>
<dbReference type="FunCoup" id="Q4WDA4">
    <property type="interactions" value="744"/>
</dbReference>
<dbReference type="STRING" id="330879.Q4WDA4"/>
<dbReference type="EnsemblFungi" id="EAL85634">
    <property type="protein sequence ID" value="EAL85634"/>
    <property type="gene ID" value="AFUA_6G04050"/>
</dbReference>
<dbReference type="GeneID" id="3505120"/>
<dbReference type="KEGG" id="afm:AFUA_6G04050"/>
<dbReference type="VEuPathDB" id="FungiDB:Afu6g04050"/>
<dbReference type="eggNOG" id="KOG2983">
    <property type="taxonomic scope" value="Eukaryota"/>
</dbReference>
<dbReference type="HOGENOM" id="CLU_034402_2_0_1"/>
<dbReference type="InParanoid" id="Q4WDA4"/>
<dbReference type="OMA" id="TFPDPNF"/>
<dbReference type="OrthoDB" id="360540at2759"/>
<dbReference type="Proteomes" id="UP000002530">
    <property type="component" value="Chromosome 6"/>
</dbReference>
<dbReference type="GO" id="GO:0005737">
    <property type="term" value="C:cytoplasm"/>
    <property type="evidence" value="ECO:0000250"/>
    <property type="project" value="UniProtKB"/>
</dbReference>
<dbReference type="GO" id="GO:0005524">
    <property type="term" value="F:ATP binding"/>
    <property type="evidence" value="ECO:0000250"/>
    <property type="project" value="UniProtKB"/>
</dbReference>
<dbReference type="GO" id="GO:0000287">
    <property type="term" value="F:magnesium ion binding"/>
    <property type="evidence" value="ECO:0000250"/>
    <property type="project" value="UniProtKB"/>
</dbReference>
<dbReference type="GO" id="GO:0044183">
    <property type="term" value="F:protein folding chaperone"/>
    <property type="evidence" value="ECO:0000250"/>
    <property type="project" value="UniProtKB"/>
</dbReference>
<dbReference type="GO" id="GO:1905143">
    <property type="term" value="P:eukaryotic translation initiation factor 2 complex assembly"/>
    <property type="evidence" value="ECO:0000250"/>
    <property type="project" value="UniProtKB"/>
</dbReference>
<dbReference type="InterPro" id="IPR009772">
    <property type="entry name" value="CDC123"/>
</dbReference>
<dbReference type="PANTHER" id="PTHR15323:SF6">
    <property type="entry name" value="CELL DIVISION CYCLE PROTEIN 123 HOMOLOG"/>
    <property type="match status" value="1"/>
</dbReference>
<dbReference type="PANTHER" id="PTHR15323">
    <property type="entry name" value="D123 PROTEIN"/>
    <property type="match status" value="1"/>
</dbReference>
<dbReference type="Pfam" id="PF07065">
    <property type="entry name" value="D123"/>
    <property type="match status" value="1"/>
</dbReference>
<organism>
    <name type="scientific">Aspergillus fumigatus (strain ATCC MYA-4609 / CBS 101355 / FGSC A1100 / Af293)</name>
    <name type="common">Neosartorya fumigata</name>
    <dbReference type="NCBI Taxonomy" id="330879"/>
    <lineage>
        <taxon>Eukaryota</taxon>
        <taxon>Fungi</taxon>
        <taxon>Dikarya</taxon>
        <taxon>Ascomycota</taxon>
        <taxon>Pezizomycotina</taxon>
        <taxon>Eurotiomycetes</taxon>
        <taxon>Eurotiomycetidae</taxon>
        <taxon>Eurotiales</taxon>
        <taxon>Aspergillaceae</taxon>
        <taxon>Aspergillus</taxon>
        <taxon>Aspergillus subgen. Fumigati</taxon>
    </lineage>
</organism>
<protein>
    <recommendedName>
        <fullName evidence="5">Translation initiation factor eIF2 assembly protein</fullName>
    </recommendedName>
    <alternativeName>
        <fullName>Cell division cycle protein 123</fullName>
    </alternativeName>
</protein>
<reference key="1">
    <citation type="journal article" date="2005" name="Nature">
        <title>Genomic sequence of the pathogenic and allergenic filamentous fungus Aspergillus fumigatus.</title>
        <authorList>
            <person name="Nierman W.C."/>
            <person name="Pain A."/>
            <person name="Anderson M.J."/>
            <person name="Wortman J.R."/>
            <person name="Kim H.S."/>
            <person name="Arroyo J."/>
            <person name="Berriman M."/>
            <person name="Abe K."/>
            <person name="Archer D.B."/>
            <person name="Bermejo C."/>
            <person name="Bennett J.W."/>
            <person name="Bowyer P."/>
            <person name="Chen D."/>
            <person name="Collins M."/>
            <person name="Coulsen R."/>
            <person name="Davies R."/>
            <person name="Dyer P.S."/>
            <person name="Farman M.L."/>
            <person name="Fedorova N."/>
            <person name="Fedorova N.D."/>
            <person name="Feldblyum T.V."/>
            <person name="Fischer R."/>
            <person name="Fosker N."/>
            <person name="Fraser A."/>
            <person name="Garcia J.L."/>
            <person name="Garcia M.J."/>
            <person name="Goble A."/>
            <person name="Goldman G.H."/>
            <person name="Gomi K."/>
            <person name="Griffith-Jones S."/>
            <person name="Gwilliam R."/>
            <person name="Haas B.J."/>
            <person name="Haas H."/>
            <person name="Harris D.E."/>
            <person name="Horiuchi H."/>
            <person name="Huang J."/>
            <person name="Humphray S."/>
            <person name="Jimenez J."/>
            <person name="Keller N."/>
            <person name="Khouri H."/>
            <person name="Kitamoto K."/>
            <person name="Kobayashi T."/>
            <person name="Konzack S."/>
            <person name="Kulkarni R."/>
            <person name="Kumagai T."/>
            <person name="Lafton A."/>
            <person name="Latge J.-P."/>
            <person name="Li W."/>
            <person name="Lord A."/>
            <person name="Lu C."/>
            <person name="Majoros W.H."/>
            <person name="May G.S."/>
            <person name="Miller B.L."/>
            <person name="Mohamoud Y."/>
            <person name="Molina M."/>
            <person name="Monod M."/>
            <person name="Mouyna I."/>
            <person name="Mulligan S."/>
            <person name="Murphy L.D."/>
            <person name="O'Neil S."/>
            <person name="Paulsen I."/>
            <person name="Penalva M.A."/>
            <person name="Pertea M."/>
            <person name="Price C."/>
            <person name="Pritchard B.L."/>
            <person name="Quail M.A."/>
            <person name="Rabbinowitsch E."/>
            <person name="Rawlins N."/>
            <person name="Rajandream M.A."/>
            <person name="Reichard U."/>
            <person name="Renauld H."/>
            <person name="Robson G.D."/>
            <person name="Rodriguez de Cordoba S."/>
            <person name="Rodriguez-Pena J.M."/>
            <person name="Ronning C.M."/>
            <person name="Rutter S."/>
            <person name="Salzberg S.L."/>
            <person name="Sanchez M."/>
            <person name="Sanchez-Ferrero J.C."/>
            <person name="Saunders D."/>
            <person name="Seeger K."/>
            <person name="Squares R."/>
            <person name="Squares S."/>
            <person name="Takeuchi M."/>
            <person name="Tekaia F."/>
            <person name="Turner G."/>
            <person name="Vazquez de Aldana C.R."/>
            <person name="Weidman J."/>
            <person name="White O."/>
            <person name="Woodward J.R."/>
            <person name="Yu J.-H."/>
            <person name="Fraser C.M."/>
            <person name="Galagan J.E."/>
            <person name="Asai K."/>
            <person name="Machida M."/>
            <person name="Hall N."/>
            <person name="Barrell B.G."/>
            <person name="Denning D.W."/>
        </authorList>
    </citation>
    <scope>NUCLEOTIDE SEQUENCE [LARGE SCALE GENOMIC DNA]</scope>
    <source>
        <strain>ATCC MYA-4609 / CBS 101355 / FGSC A1100 / Af293</strain>
    </source>
</reference>
<proteinExistence type="inferred from homology"/>
<evidence type="ECO:0000250" key="1">
    <source>
        <dbReference type="UniProtKB" id="O75794"/>
    </source>
</evidence>
<evidence type="ECO:0000250" key="2">
    <source>
        <dbReference type="UniProtKB" id="Q05791"/>
    </source>
</evidence>
<evidence type="ECO:0000250" key="3">
    <source>
        <dbReference type="UniProtKB" id="Q9P7N5"/>
    </source>
</evidence>
<evidence type="ECO:0000256" key="4">
    <source>
        <dbReference type="SAM" id="MobiDB-lite"/>
    </source>
</evidence>
<evidence type="ECO:0000305" key="5"/>
<gene>
    <name type="primary">cdc123</name>
    <name type="ORF">AFUA_6G04050</name>
</gene>
<feature type="chain" id="PRO_0000350936" description="Translation initiation factor eIF2 assembly protein">
    <location>
        <begin position="1"/>
        <end position="417"/>
    </location>
</feature>
<feature type="region of interest" description="Disordered" evidence="4">
    <location>
        <begin position="1"/>
        <end position="23"/>
    </location>
</feature>
<feature type="region of interest" description="Disordered" evidence="4">
    <location>
        <begin position="72"/>
        <end position="96"/>
    </location>
</feature>
<feature type="region of interest" description="Disordered" evidence="4">
    <location>
        <begin position="323"/>
        <end position="352"/>
    </location>
</feature>
<feature type="compositionally biased region" description="Polar residues" evidence="4">
    <location>
        <begin position="1"/>
        <end position="18"/>
    </location>
</feature>
<feature type="compositionally biased region" description="Acidic residues" evidence="4">
    <location>
        <begin position="82"/>
        <end position="96"/>
    </location>
</feature>
<feature type="compositionally biased region" description="Acidic residues" evidence="4">
    <location>
        <begin position="329"/>
        <end position="347"/>
    </location>
</feature>
<feature type="binding site" evidence="1">
    <location>
        <position position="123"/>
    </location>
    <ligand>
        <name>ATP</name>
        <dbReference type="ChEBI" id="CHEBI:30616"/>
    </ligand>
</feature>
<feature type="binding site" evidence="1">
    <location>
        <position position="126"/>
    </location>
    <ligand>
        <name>ATP</name>
        <dbReference type="ChEBI" id="CHEBI:30616"/>
    </ligand>
</feature>
<feature type="binding site" evidence="1">
    <location>
        <position position="128"/>
    </location>
    <ligand>
        <name>ATP</name>
        <dbReference type="ChEBI" id="CHEBI:30616"/>
    </ligand>
</feature>
<feature type="binding site" evidence="3">
    <location>
        <position position="130"/>
    </location>
    <ligand>
        <name>ATP</name>
        <dbReference type="ChEBI" id="CHEBI:30616"/>
    </ligand>
</feature>
<feature type="binding site" evidence="3">
    <location>
        <position position="194"/>
    </location>
    <ligand>
        <name>ATP</name>
        <dbReference type="ChEBI" id="CHEBI:30616"/>
    </ligand>
</feature>
<feature type="binding site" evidence="1">
    <location>
        <position position="195"/>
    </location>
    <ligand>
        <name>ATP</name>
        <dbReference type="ChEBI" id="CHEBI:30616"/>
    </ligand>
</feature>
<feature type="binding site" evidence="1">
    <location>
        <position position="204"/>
    </location>
    <ligand>
        <name>ATP</name>
        <dbReference type="ChEBI" id="CHEBI:30616"/>
    </ligand>
</feature>
<feature type="binding site" evidence="1">
    <location>
        <position position="206"/>
    </location>
    <ligand>
        <name>ATP</name>
        <dbReference type="ChEBI" id="CHEBI:30616"/>
    </ligand>
</feature>
<feature type="binding site" evidence="1">
    <location>
        <position position="220"/>
    </location>
    <ligand>
        <name>ATP</name>
        <dbReference type="ChEBI" id="CHEBI:30616"/>
    </ligand>
</feature>
<feature type="binding site" evidence="3">
    <location>
        <position position="259"/>
    </location>
    <ligand>
        <name>ATP</name>
        <dbReference type="ChEBI" id="CHEBI:30616"/>
    </ligand>
</feature>
<feature type="binding site" evidence="1">
    <location>
        <position position="273"/>
    </location>
    <ligand>
        <name>ATP</name>
        <dbReference type="ChEBI" id="CHEBI:30616"/>
    </ligand>
</feature>
<feature type="binding site" evidence="1">
    <location>
        <position position="273"/>
    </location>
    <ligand>
        <name>Mg(2+)</name>
        <dbReference type="ChEBI" id="CHEBI:18420"/>
    </ligand>
</feature>
<feature type="binding site" evidence="1">
    <location>
        <position position="275"/>
    </location>
    <ligand>
        <name>ATP</name>
        <dbReference type="ChEBI" id="CHEBI:30616"/>
    </ligand>
</feature>
<feature type="binding site" evidence="1">
    <location>
        <position position="275"/>
    </location>
    <ligand>
        <name>Mg(2+)</name>
        <dbReference type="ChEBI" id="CHEBI:18420"/>
    </ligand>
</feature>